<evidence type="ECO:0000250" key="1"/>
<evidence type="ECO:0000250" key="2">
    <source>
        <dbReference type="UniProtKB" id="P97794"/>
    </source>
</evidence>
<evidence type="ECO:0000255" key="3"/>
<evidence type="ECO:0000256" key="4">
    <source>
        <dbReference type="SAM" id="MobiDB-lite"/>
    </source>
</evidence>
<evidence type="ECO:0000269" key="5">
    <source>
    </source>
</evidence>
<evidence type="ECO:0000269" key="6">
    <source>
    </source>
</evidence>
<evidence type="ECO:0000269" key="7">
    <source>
    </source>
</evidence>
<evidence type="ECO:0000269" key="8">
    <source>
    </source>
</evidence>
<evidence type="ECO:0000269" key="9">
    <source>
    </source>
</evidence>
<evidence type="ECO:0000269" key="10">
    <source>
    </source>
</evidence>
<evidence type="ECO:0000305" key="11"/>
<feature type="chain" id="PRO_0000154947" description="ATP-sensitive inward rectifier potassium channel 8">
    <location>
        <begin position="1"/>
        <end position="424"/>
    </location>
</feature>
<feature type="topological domain" description="Cytoplasmic" evidence="1">
    <location>
        <begin position="1"/>
        <end position="69"/>
    </location>
</feature>
<feature type="transmembrane region" description="Helical; Name=M1" evidence="1">
    <location>
        <begin position="70"/>
        <end position="94"/>
    </location>
</feature>
<feature type="topological domain" description="Extracellular" evidence="1">
    <location>
        <begin position="95"/>
        <end position="126"/>
    </location>
</feature>
<feature type="intramembrane region" description="Helical; Pore-forming; Name=H5" evidence="1">
    <location>
        <begin position="127"/>
        <end position="138"/>
    </location>
</feature>
<feature type="intramembrane region" description="Pore-forming" evidence="1">
    <location>
        <begin position="139"/>
        <end position="145"/>
    </location>
</feature>
<feature type="topological domain" description="Extracellular" evidence="1">
    <location>
        <begin position="146"/>
        <end position="154"/>
    </location>
</feature>
<feature type="transmembrane region" description="Helical; Name=M2" evidence="1">
    <location>
        <begin position="155"/>
        <end position="176"/>
    </location>
</feature>
<feature type="topological domain" description="Cytoplasmic" evidence="1">
    <location>
        <begin position="177"/>
        <end position="424"/>
    </location>
</feature>
<feature type="region of interest" description="Disordered" evidence="4">
    <location>
        <begin position="375"/>
        <end position="424"/>
    </location>
</feature>
<feature type="short sequence motif" description="Selectivity filter" evidence="1">
    <location>
        <begin position="140"/>
        <end position="145"/>
    </location>
</feature>
<feature type="compositionally biased region" description="Low complexity" evidence="4">
    <location>
        <begin position="387"/>
        <end position="404"/>
    </location>
</feature>
<feature type="site" description="Role in the control of polyamine-mediated channel gating and in the blocking by intracellular magnesium" evidence="1">
    <location>
        <position position="170"/>
    </location>
</feature>
<feature type="modified residue" description="Phosphoserine" evidence="2">
    <location>
        <position position="6"/>
    </location>
</feature>
<feature type="sequence variant" id="VAR_079518" description="In HTOCD; uncertain significance; displays gain of function; increased open state stability, reduced sensitivity to ATP inhibition and increased channel activity; almost completely abolishes high affinity sensitivity to glibenclamide, an inhibitor of ATP-sensitive potassium channels; dbSNP:rs606231263." evidence="7 9">
    <original>V</original>
    <variation>M</variation>
    <location>
        <position position="65"/>
    </location>
</feature>
<feature type="sequence variant" id="VAR_075226" description="In HTOCD; uncertain significance; displays gain of function; displays reduced ATP sensitivity; dbSNP:rs606231264." evidence="8">
    <original>C</original>
    <variation>S</variation>
    <location>
        <position position="176"/>
    </location>
</feature>
<feature type="sequence variant" id="VAR_065878" description="In SIDS; the mutant channel displays reduced potassium currents compared to wild type." evidence="6">
    <location>
        <position position="332"/>
    </location>
</feature>
<feature type="sequence variant" id="VAR_049670" description="In dbSNP:rs34811413.">
    <original>V</original>
    <variation>A</variation>
    <location>
        <position position="334"/>
    </location>
</feature>
<feature type="sequence variant" id="VAR_065879" description="In SIDS; the mutant channel displays reduced potassium currents compared to wild type; dbSNP:rs147316959." evidence="6">
    <original>V</original>
    <variation>I</variation>
    <location>
        <position position="346"/>
    </location>
</feature>
<feature type="sequence variant" id="VAR_065225" description="Found in Brugada syndrome and other J-wave syndromes; uncertain significance; the mutant channel displays an increase in glibenclamide-sensitive potassium currents compared to wild type; dbSNP:rs72554071." evidence="5">
    <original>S</original>
    <variation>L</variation>
    <location>
        <position position="422"/>
    </location>
</feature>
<feature type="mutagenesis site" description="No effect on channel activity." evidence="9">
    <original>V</original>
    <variation>L</variation>
    <location>
        <position position="65"/>
    </location>
</feature>
<protein>
    <recommendedName>
        <fullName>ATP-sensitive inward rectifier potassium channel 8</fullName>
    </recommendedName>
    <alternativeName>
        <fullName>Inward rectifier K(+) channel Kir6.1</fullName>
    </alternativeName>
    <alternativeName>
        <fullName>Potassium channel, inwardly rectifying subfamily J member 8</fullName>
    </alternativeName>
    <alternativeName>
        <fullName>uKATP-1</fullName>
    </alternativeName>
</protein>
<sequence>MLARKSIIPEEYVLARIAAENLRKPRIRDRLPKARFIAKSGACNLAHKNIREQGRFLQDIFTTLVDLKWRHTLVIFTMSFLCSWLLFAIMWWLVAFAHGDIYAYMEKSGMEKSGLESTVCVTNVRSFTSAFLFSIEVQVTIGFGGRMMTEECPLAITVLILQNIVGLIINAVMLGCIFMKTAQAHRRAETLIFSRHAVIAVRNGKLCFMFRVGDLRKSMIISASVRIQVVKKTTTPEGEVVPIHQLDIPVDNPIESNNIFLVAPLIICHVIDKRSPLYDISATDLANQDLEVIVILEGVVETTGITTQARTSYIAEEIQWGHRFVSIVTEEEGVYSVDYSKFGNTVKVAAPRCSARELDEKPSILIQTLQKSELSHQNSLRKRNSMRRNNSMRRNNSIRRNNSSLMVPKVQFMTPEGNQNTSES</sequence>
<dbReference type="EMBL" id="D50312">
    <property type="protein sequence ID" value="BAA08851.1"/>
    <property type="molecule type" value="mRNA"/>
</dbReference>
<dbReference type="EMBL" id="D50315">
    <property type="protein sequence ID" value="BAA08852.1"/>
    <property type="molecule type" value="Genomic_DNA"/>
</dbReference>
<dbReference type="EMBL" id="BC000544">
    <property type="protein sequence ID" value="AAH00544.1"/>
    <property type="molecule type" value="mRNA"/>
</dbReference>
<dbReference type="CCDS" id="CCDS8692.1"/>
<dbReference type="RefSeq" id="NP_004973.1">
    <property type="nucleotide sequence ID" value="NM_004982.4"/>
</dbReference>
<dbReference type="RefSeq" id="XP_005253415.1">
    <property type="nucleotide sequence ID" value="XM_005253358.4"/>
</dbReference>
<dbReference type="RefSeq" id="XP_016874772.1">
    <property type="nucleotide sequence ID" value="XM_017019283.1"/>
</dbReference>
<dbReference type="RefSeq" id="XP_016874773.1">
    <property type="nucleotide sequence ID" value="XM_017019284.1"/>
</dbReference>
<dbReference type="SMR" id="Q15842"/>
<dbReference type="BioGRID" id="109966">
    <property type="interactions" value="42"/>
</dbReference>
<dbReference type="ELM" id="Q15842"/>
<dbReference type="FunCoup" id="Q15842">
    <property type="interactions" value="200"/>
</dbReference>
<dbReference type="IntAct" id="Q15842">
    <property type="interactions" value="34"/>
</dbReference>
<dbReference type="STRING" id="9606.ENSP00000499300"/>
<dbReference type="ChEMBL" id="CHEMBL4770"/>
<dbReference type="DrugBank" id="DB11148">
    <property type="generic name" value="Butamben"/>
</dbReference>
<dbReference type="DrugBank" id="DB01251">
    <property type="generic name" value="Gliquidone"/>
</dbReference>
<dbReference type="DrugBank" id="DB01289">
    <property type="generic name" value="Glisoxepide"/>
</dbReference>
<dbReference type="DrugBank" id="DB01016">
    <property type="generic name" value="Glyburide"/>
</dbReference>
<dbReference type="DrugBank" id="DB00922">
    <property type="generic name" value="Levosimendan"/>
</dbReference>
<dbReference type="DrugBank" id="DB00914">
    <property type="generic name" value="Phenformin"/>
</dbReference>
<dbReference type="DrugBank" id="DB00867">
    <property type="generic name" value="Ritodrine"/>
</dbReference>
<dbReference type="DrugBank" id="DB01154">
    <property type="generic name" value="Thiamylal"/>
</dbReference>
<dbReference type="DrugBank" id="DB01392">
    <property type="generic name" value="Yohimbine"/>
</dbReference>
<dbReference type="DrugCentral" id="Q15842"/>
<dbReference type="TCDB" id="1.A.2.1.13">
    <property type="family name" value="the inward rectifier k(+) channel (irk-c) family"/>
</dbReference>
<dbReference type="iPTMnet" id="Q15842"/>
<dbReference type="PhosphoSitePlus" id="Q15842"/>
<dbReference type="BioMuta" id="KCNJ8"/>
<dbReference type="DMDM" id="2493600"/>
<dbReference type="jPOST" id="Q15842"/>
<dbReference type="MassIVE" id="Q15842"/>
<dbReference type="PaxDb" id="9606-ENSP00000240662"/>
<dbReference type="PeptideAtlas" id="Q15842"/>
<dbReference type="ProteomicsDB" id="60787"/>
<dbReference type="Antibodypedia" id="4014">
    <property type="antibodies" value="262 antibodies from 31 providers"/>
</dbReference>
<dbReference type="DNASU" id="3764"/>
<dbReference type="Ensembl" id="ENST00000240662.3">
    <property type="protein sequence ID" value="ENSP00000240662.2"/>
    <property type="gene ID" value="ENSG00000121361.5"/>
</dbReference>
<dbReference type="Ensembl" id="ENST00000665145.1">
    <property type="protein sequence ID" value="ENSP00000499300.1"/>
    <property type="gene ID" value="ENSG00000121361.5"/>
</dbReference>
<dbReference type="Ensembl" id="ENST00000667884.1">
    <property type="protein sequence ID" value="ENSP00000499462.1"/>
    <property type="gene ID" value="ENSG00000121361.5"/>
</dbReference>
<dbReference type="GeneID" id="3764"/>
<dbReference type="KEGG" id="hsa:3764"/>
<dbReference type="MANE-Select" id="ENST00000240662.3">
    <property type="protein sequence ID" value="ENSP00000240662.2"/>
    <property type="RefSeq nucleotide sequence ID" value="NM_004982.4"/>
    <property type="RefSeq protein sequence ID" value="NP_004973.1"/>
</dbReference>
<dbReference type="UCSC" id="uc001rff.4">
    <property type="organism name" value="human"/>
</dbReference>
<dbReference type="AGR" id="HGNC:6269"/>
<dbReference type="CTD" id="3764"/>
<dbReference type="DisGeNET" id="3764"/>
<dbReference type="GeneCards" id="KCNJ8"/>
<dbReference type="GeneReviews" id="KCNJ8"/>
<dbReference type="HGNC" id="HGNC:6269">
    <property type="gene designation" value="KCNJ8"/>
</dbReference>
<dbReference type="HPA" id="ENSG00000121361">
    <property type="expression patterns" value="Tissue enhanced (heart)"/>
</dbReference>
<dbReference type="MalaCards" id="KCNJ8"/>
<dbReference type="MIM" id="239850">
    <property type="type" value="phenotype"/>
</dbReference>
<dbReference type="MIM" id="272120">
    <property type="type" value="phenotype"/>
</dbReference>
<dbReference type="MIM" id="600935">
    <property type="type" value="gene"/>
</dbReference>
<dbReference type="neXtProt" id="NX_Q15842"/>
<dbReference type="OpenTargets" id="ENSG00000121361"/>
<dbReference type="Orphanet" id="130">
    <property type="disease" value="Brugada syndrome"/>
</dbReference>
<dbReference type="Orphanet" id="1517">
    <property type="disease" value="Cantu syndrome"/>
</dbReference>
<dbReference type="PharmGKB" id="PA30050"/>
<dbReference type="VEuPathDB" id="HostDB:ENSG00000121361"/>
<dbReference type="eggNOG" id="KOG3827">
    <property type="taxonomic scope" value="Eukaryota"/>
</dbReference>
<dbReference type="GeneTree" id="ENSGT01130000278330"/>
<dbReference type="HOGENOM" id="CLU_022738_4_0_1"/>
<dbReference type="InParanoid" id="Q15842"/>
<dbReference type="OMA" id="RMITEHC"/>
<dbReference type="OrthoDB" id="273257at2759"/>
<dbReference type="PAN-GO" id="Q15842">
    <property type="GO annotations" value="4 GO annotations based on evolutionary models"/>
</dbReference>
<dbReference type="PhylomeDB" id="Q15842"/>
<dbReference type="TreeFam" id="TF313676"/>
<dbReference type="PathwayCommons" id="Q15842"/>
<dbReference type="Reactome" id="R-HSA-1296025">
    <property type="pathway name" value="ATP sensitive Potassium channels"/>
</dbReference>
<dbReference type="SignaLink" id="Q15842"/>
<dbReference type="SIGNOR" id="Q15842"/>
<dbReference type="BioGRID-ORCS" id="3764">
    <property type="hits" value="8 hits in 1161 CRISPR screens"/>
</dbReference>
<dbReference type="GeneWiki" id="KCNJ8"/>
<dbReference type="GenomeRNAi" id="3764"/>
<dbReference type="Pharos" id="Q15842">
    <property type="development level" value="Tbio"/>
</dbReference>
<dbReference type="PRO" id="PR:Q15842"/>
<dbReference type="Proteomes" id="UP000005640">
    <property type="component" value="Chromosome 12"/>
</dbReference>
<dbReference type="RNAct" id="Q15842">
    <property type="molecule type" value="protein"/>
</dbReference>
<dbReference type="Bgee" id="ENSG00000121361">
    <property type="expression patterns" value="Expressed in heart right ventricle and 158 other cell types or tissues"/>
</dbReference>
<dbReference type="ExpressionAtlas" id="Q15842">
    <property type="expression patterns" value="baseline and differential"/>
</dbReference>
<dbReference type="GO" id="GO:0098978">
    <property type="term" value="C:glutamatergic synapse"/>
    <property type="evidence" value="ECO:0007669"/>
    <property type="project" value="Ensembl"/>
</dbReference>
<dbReference type="GO" id="GO:0008282">
    <property type="term" value="C:inward rectifying potassium channel"/>
    <property type="evidence" value="ECO:0007669"/>
    <property type="project" value="Ensembl"/>
</dbReference>
<dbReference type="GO" id="GO:0030016">
    <property type="term" value="C:myofibril"/>
    <property type="evidence" value="ECO:0007669"/>
    <property type="project" value="Ensembl"/>
</dbReference>
<dbReference type="GO" id="GO:0005886">
    <property type="term" value="C:plasma membrane"/>
    <property type="evidence" value="ECO:0000318"/>
    <property type="project" value="GO_Central"/>
</dbReference>
<dbReference type="GO" id="GO:0031004">
    <property type="term" value="C:potassium ion-transporting ATPase complex"/>
    <property type="evidence" value="ECO:0000250"/>
    <property type="project" value="ARUK-UCL"/>
</dbReference>
<dbReference type="GO" id="GO:0048787">
    <property type="term" value="C:presynaptic active zone membrane"/>
    <property type="evidence" value="ECO:0007669"/>
    <property type="project" value="Ensembl"/>
</dbReference>
<dbReference type="GO" id="GO:0042383">
    <property type="term" value="C:sarcolemma"/>
    <property type="evidence" value="ECO:0007669"/>
    <property type="project" value="Ensembl"/>
</dbReference>
<dbReference type="GO" id="GO:0008076">
    <property type="term" value="C:voltage-gated potassium channel complex"/>
    <property type="evidence" value="ECO:0000304"/>
    <property type="project" value="ProtInc"/>
</dbReference>
<dbReference type="GO" id="GO:0005524">
    <property type="term" value="F:ATP binding"/>
    <property type="evidence" value="ECO:0000250"/>
    <property type="project" value="ARUK-UCL"/>
</dbReference>
<dbReference type="GO" id="GO:0015272">
    <property type="term" value="F:ATP-activated inward rectifier potassium channel activity"/>
    <property type="evidence" value="ECO:0000314"/>
    <property type="project" value="BHF-UCL"/>
</dbReference>
<dbReference type="GO" id="GO:0019829">
    <property type="term" value="F:ATPase-coupled monoatomic cation transmembrane transporter activity"/>
    <property type="evidence" value="ECO:0000250"/>
    <property type="project" value="ARUK-UCL"/>
</dbReference>
<dbReference type="GO" id="GO:0005242">
    <property type="term" value="F:inward rectifier potassium channel activity"/>
    <property type="evidence" value="ECO:0000304"/>
    <property type="project" value="ProtInc"/>
</dbReference>
<dbReference type="GO" id="GO:0017098">
    <property type="term" value="F:sulfonylurea receptor binding"/>
    <property type="evidence" value="ECO:0007669"/>
    <property type="project" value="Ensembl"/>
</dbReference>
<dbReference type="GO" id="GO:0099508">
    <property type="term" value="F:voltage-gated monoatomic ion channel activity involved in regulation of presynaptic membrane potential"/>
    <property type="evidence" value="ECO:0000314"/>
    <property type="project" value="SynGO"/>
</dbReference>
<dbReference type="GO" id="GO:1902282">
    <property type="term" value="F:voltage-gated potassium channel activity involved in ventricular cardiac muscle cell action potential repolarization"/>
    <property type="evidence" value="ECO:0000315"/>
    <property type="project" value="BHF-UCL"/>
</dbReference>
<dbReference type="GO" id="GO:0002250">
    <property type="term" value="P:adaptive immune response"/>
    <property type="evidence" value="ECO:0007669"/>
    <property type="project" value="Ensembl"/>
</dbReference>
<dbReference type="GO" id="GO:0006915">
    <property type="term" value="P:apoptotic process"/>
    <property type="evidence" value="ECO:0007669"/>
    <property type="project" value="Ensembl"/>
</dbReference>
<dbReference type="GO" id="GO:0060922">
    <property type="term" value="P:atrioventricular node cell differentiation"/>
    <property type="evidence" value="ECO:0007669"/>
    <property type="project" value="Ensembl"/>
</dbReference>
<dbReference type="GO" id="GO:0070588">
    <property type="term" value="P:calcium ion transmembrane transport"/>
    <property type="evidence" value="ECO:0007669"/>
    <property type="project" value="Ensembl"/>
</dbReference>
<dbReference type="GO" id="GO:0061762">
    <property type="term" value="P:CAMKK-AMPK signaling cascade"/>
    <property type="evidence" value="ECO:0007669"/>
    <property type="project" value="Ensembl"/>
</dbReference>
<dbReference type="GO" id="GO:0060976">
    <property type="term" value="P:coronary vasculature development"/>
    <property type="evidence" value="ECO:0007669"/>
    <property type="project" value="Ensembl"/>
</dbReference>
<dbReference type="GO" id="GO:0051607">
    <property type="term" value="P:defense response to virus"/>
    <property type="evidence" value="ECO:0007669"/>
    <property type="project" value="Ensembl"/>
</dbReference>
<dbReference type="GO" id="GO:0008340">
    <property type="term" value="P:determination of adult lifespan"/>
    <property type="evidence" value="ECO:0007669"/>
    <property type="project" value="Ensembl"/>
</dbReference>
<dbReference type="GO" id="GO:0030010">
    <property type="term" value="P:establishment of cell polarity"/>
    <property type="evidence" value="ECO:0007669"/>
    <property type="project" value="Ensembl"/>
</dbReference>
<dbReference type="GO" id="GO:0045444">
    <property type="term" value="P:fat cell differentiation"/>
    <property type="evidence" value="ECO:0007669"/>
    <property type="project" value="Ensembl"/>
</dbReference>
<dbReference type="GO" id="GO:0015908">
    <property type="term" value="P:fatty acid transport"/>
    <property type="evidence" value="ECO:0007669"/>
    <property type="project" value="Ensembl"/>
</dbReference>
<dbReference type="GO" id="GO:0048144">
    <property type="term" value="P:fibroblast proliferation"/>
    <property type="evidence" value="ECO:0007669"/>
    <property type="project" value="Ensembl"/>
</dbReference>
<dbReference type="GO" id="GO:0010467">
    <property type="term" value="P:gene expression"/>
    <property type="evidence" value="ECO:0007669"/>
    <property type="project" value="Ensembl"/>
</dbReference>
<dbReference type="GO" id="GO:0061535">
    <property type="term" value="P:glutamate secretion, neurotransmission"/>
    <property type="evidence" value="ECO:0007669"/>
    <property type="project" value="Ensembl"/>
</dbReference>
<dbReference type="GO" id="GO:0003007">
    <property type="term" value="P:heart morphogenesis"/>
    <property type="evidence" value="ECO:0007669"/>
    <property type="project" value="Ensembl"/>
</dbReference>
<dbReference type="GO" id="GO:0098662">
    <property type="term" value="P:inorganic cation transmembrane transport"/>
    <property type="evidence" value="ECO:0000250"/>
    <property type="project" value="ARUK-UCL"/>
</dbReference>
<dbReference type="GO" id="GO:0001822">
    <property type="term" value="P:kidney development"/>
    <property type="evidence" value="ECO:0007669"/>
    <property type="project" value="Ensembl"/>
</dbReference>
<dbReference type="GO" id="GO:0098915">
    <property type="term" value="P:membrane repolarization during ventricular cardiac muscle cell action potential"/>
    <property type="evidence" value="ECO:0000315"/>
    <property type="project" value="BHF-UCL"/>
</dbReference>
<dbReference type="GO" id="GO:0001774">
    <property type="term" value="P:microglial cell activation"/>
    <property type="evidence" value="ECO:0007669"/>
    <property type="project" value="Ensembl"/>
</dbReference>
<dbReference type="GO" id="GO:0050905">
    <property type="term" value="P:neuromuscular process"/>
    <property type="evidence" value="ECO:0007669"/>
    <property type="project" value="Ensembl"/>
</dbReference>
<dbReference type="GO" id="GO:0044546">
    <property type="term" value="P:NLRP3 inflammasome complex assembly"/>
    <property type="evidence" value="ECO:0007669"/>
    <property type="project" value="Ensembl"/>
</dbReference>
<dbReference type="GO" id="GO:0038066">
    <property type="term" value="P:p38MAPK cascade"/>
    <property type="evidence" value="ECO:0007669"/>
    <property type="project" value="Ensembl"/>
</dbReference>
<dbReference type="GO" id="GO:1990573">
    <property type="term" value="P:potassium ion import across plasma membrane"/>
    <property type="evidence" value="ECO:0000314"/>
    <property type="project" value="BHF-UCL"/>
</dbReference>
<dbReference type="GO" id="GO:0071805">
    <property type="term" value="P:potassium ion transmembrane transport"/>
    <property type="evidence" value="ECO:0000303"/>
    <property type="project" value="ARUK-UCL"/>
</dbReference>
<dbReference type="GO" id="GO:0006813">
    <property type="term" value="P:potassium ion transport"/>
    <property type="evidence" value="ECO:0000304"/>
    <property type="project" value="ProtInc"/>
</dbReference>
<dbReference type="GO" id="GO:0009306">
    <property type="term" value="P:protein secretion"/>
    <property type="evidence" value="ECO:0007669"/>
    <property type="project" value="Ensembl"/>
</dbReference>
<dbReference type="GO" id="GO:0150103">
    <property type="term" value="P:reactive gliosis"/>
    <property type="evidence" value="ECO:0007669"/>
    <property type="project" value="Ensembl"/>
</dbReference>
<dbReference type="GO" id="GO:0008217">
    <property type="term" value="P:regulation of blood pressure"/>
    <property type="evidence" value="ECO:0007669"/>
    <property type="project" value="Ensembl"/>
</dbReference>
<dbReference type="GO" id="GO:0002027">
    <property type="term" value="P:regulation of heart rate"/>
    <property type="evidence" value="ECO:0007669"/>
    <property type="project" value="Ensembl"/>
</dbReference>
<dbReference type="GO" id="GO:0034765">
    <property type="term" value="P:regulation of monoatomic ion transmembrane transport"/>
    <property type="evidence" value="ECO:0000318"/>
    <property type="project" value="GO_Central"/>
</dbReference>
<dbReference type="GO" id="GO:0033198">
    <property type="term" value="P:response to ATP"/>
    <property type="evidence" value="ECO:0007669"/>
    <property type="project" value="Ensembl"/>
</dbReference>
<dbReference type="GO" id="GO:0034097">
    <property type="term" value="P:response to cytokine"/>
    <property type="evidence" value="ECO:0007669"/>
    <property type="project" value="Ensembl"/>
</dbReference>
<dbReference type="GO" id="GO:0034976">
    <property type="term" value="P:response to endoplasmic reticulum stress"/>
    <property type="evidence" value="ECO:0007669"/>
    <property type="project" value="Ensembl"/>
</dbReference>
<dbReference type="GO" id="GO:0043330">
    <property type="term" value="P:response to exogenous dsRNA"/>
    <property type="evidence" value="ECO:0007669"/>
    <property type="project" value="Ensembl"/>
</dbReference>
<dbReference type="GO" id="GO:0001666">
    <property type="term" value="P:response to hypoxia"/>
    <property type="evidence" value="ECO:0007669"/>
    <property type="project" value="Ensembl"/>
</dbReference>
<dbReference type="GO" id="GO:0032868">
    <property type="term" value="P:response to insulin"/>
    <property type="evidence" value="ECO:0007669"/>
    <property type="project" value="Ensembl"/>
</dbReference>
<dbReference type="GO" id="GO:0002931">
    <property type="term" value="P:response to ischemia"/>
    <property type="evidence" value="ECO:0007669"/>
    <property type="project" value="Ensembl"/>
</dbReference>
<dbReference type="GO" id="GO:0032496">
    <property type="term" value="P:response to lipopolysaccharide"/>
    <property type="evidence" value="ECO:0007669"/>
    <property type="project" value="Ensembl"/>
</dbReference>
<dbReference type="GO" id="GO:1904638">
    <property type="term" value="P:response to resveratrol"/>
    <property type="evidence" value="ECO:0007669"/>
    <property type="project" value="Ensembl"/>
</dbReference>
<dbReference type="GO" id="GO:0009410">
    <property type="term" value="P:response to xenobiotic stimulus"/>
    <property type="evidence" value="ECO:0007669"/>
    <property type="project" value="Ensembl"/>
</dbReference>
<dbReference type="GO" id="GO:0051124">
    <property type="term" value="P:synaptic assembly at neuromuscular junction"/>
    <property type="evidence" value="ECO:0007669"/>
    <property type="project" value="Ensembl"/>
</dbReference>
<dbReference type="GO" id="GO:0019226">
    <property type="term" value="P:transmission of nerve impulse"/>
    <property type="evidence" value="ECO:0007669"/>
    <property type="project" value="Ensembl"/>
</dbReference>
<dbReference type="GO" id="GO:0150104">
    <property type="term" value="P:transport across blood-brain barrier"/>
    <property type="evidence" value="ECO:0000303"/>
    <property type="project" value="ARUK-UCL"/>
</dbReference>
<dbReference type="GO" id="GO:0042311">
    <property type="term" value="P:vasodilation"/>
    <property type="evidence" value="ECO:0007669"/>
    <property type="project" value="Ensembl"/>
</dbReference>
<dbReference type="GO" id="GO:0003229">
    <property type="term" value="P:ventricular cardiac muscle tissue development"/>
    <property type="evidence" value="ECO:0007669"/>
    <property type="project" value="Ensembl"/>
</dbReference>
<dbReference type="FunFam" id="1.10.287.70:FF:000050">
    <property type="entry name" value="ATP-sensitive inward rectifier potassium channel 11"/>
    <property type="match status" value="1"/>
</dbReference>
<dbReference type="FunFam" id="2.60.40.1400:FF:000001">
    <property type="entry name" value="G protein-activated inward rectifier potassium channel 2"/>
    <property type="match status" value="1"/>
</dbReference>
<dbReference type="Gene3D" id="1.10.287.70">
    <property type="match status" value="1"/>
</dbReference>
<dbReference type="Gene3D" id="2.60.40.1400">
    <property type="entry name" value="G protein-activated inward rectifier potassium channel 1"/>
    <property type="match status" value="1"/>
</dbReference>
<dbReference type="InterPro" id="IPR014756">
    <property type="entry name" value="Ig_E-set"/>
</dbReference>
<dbReference type="InterPro" id="IPR041647">
    <property type="entry name" value="IRK_C"/>
</dbReference>
<dbReference type="InterPro" id="IPR016449">
    <property type="entry name" value="K_chnl_inward-rec_Kir"/>
</dbReference>
<dbReference type="InterPro" id="IPR003278">
    <property type="entry name" value="K_chnl_inward-rec_Kir6.1"/>
</dbReference>
<dbReference type="InterPro" id="IPR013518">
    <property type="entry name" value="K_chnl_inward-rec_Kir_cyto"/>
</dbReference>
<dbReference type="InterPro" id="IPR040445">
    <property type="entry name" value="Kir_TM"/>
</dbReference>
<dbReference type="PANTHER" id="PTHR11767:SF11">
    <property type="entry name" value="ATP-SENSITIVE INWARD RECTIFIER POTASSIUM CHANNEL 8"/>
    <property type="match status" value="1"/>
</dbReference>
<dbReference type="PANTHER" id="PTHR11767">
    <property type="entry name" value="INWARD RECTIFIER POTASSIUM CHANNEL"/>
    <property type="match status" value="1"/>
</dbReference>
<dbReference type="Pfam" id="PF01007">
    <property type="entry name" value="IRK"/>
    <property type="match status" value="1"/>
</dbReference>
<dbReference type="Pfam" id="PF17655">
    <property type="entry name" value="IRK_C"/>
    <property type="match status" value="1"/>
</dbReference>
<dbReference type="PIRSF" id="PIRSF005465">
    <property type="entry name" value="GIRK_kir"/>
    <property type="match status" value="1"/>
</dbReference>
<dbReference type="PRINTS" id="PR01331">
    <property type="entry name" value="KIR61CHANNEL"/>
</dbReference>
<dbReference type="PRINTS" id="PR01320">
    <property type="entry name" value="KIRCHANNEL"/>
</dbReference>
<dbReference type="SUPFAM" id="SSF81296">
    <property type="entry name" value="E set domains"/>
    <property type="match status" value="1"/>
</dbReference>
<dbReference type="SUPFAM" id="SSF81324">
    <property type="entry name" value="Voltage-gated potassium channels"/>
    <property type="match status" value="1"/>
</dbReference>
<gene>
    <name type="primary">KCNJ8</name>
</gene>
<name>KCNJ8_HUMAN</name>
<reference key="1">
    <citation type="journal article" date="1995" name="Genomics">
        <title>cDNA sequence, gene structure, and chromosomal localization of the human ATP-sensitive potassium channel, uKATP-1, gene (KCNJ8).</title>
        <authorList>
            <person name="Inagaki N."/>
            <person name="Inazawa J."/>
            <person name="Seino S."/>
        </authorList>
    </citation>
    <scope>NUCLEOTIDE SEQUENCE [GENOMIC DNA / MRNA]</scope>
    <source>
        <tissue>Lung</tissue>
        <tissue>Placenta</tissue>
    </source>
</reference>
<reference key="2">
    <citation type="journal article" date="2004" name="Genome Res.">
        <title>The status, quality, and expansion of the NIH full-length cDNA project: the Mammalian Gene Collection (MGC).</title>
        <authorList>
            <consortium name="The MGC Project Team"/>
        </authorList>
    </citation>
    <scope>NUCLEOTIDE SEQUENCE [LARGE SCALE MRNA]</scope>
    <source>
        <tissue>Brain</tissue>
    </source>
</reference>
<reference key="3">
    <citation type="journal article" date="1998" name="Gene">
        <title>Genomic organization and expression of KCNJ8/Kir6.1, a gene encoding a subunit of an ATP-sensitive potassium channel.</title>
        <authorList>
            <person name="Erginel-Unaltuna N."/>
            <person name="Yang W.P."/>
            <person name="Blanar M.A."/>
        </authorList>
    </citation>
    <scope>TISSUE SPECIFICITY</scope>
</reference>
<reference key="4">
    <citation type="journal article" date="2010" name="Heart Rhythm">
        <title>J wave syndromes.</title>
        <authorList>
            <person name="Antzelevitch C."/>
            <person name="Yan G.X."/>
        </authorList>
    </citation>
    <scope>REVIEW ON J-WAVE SYNDROMES</scope>
</reference>
<reference key="5">
    <citation type="journal article" date="2010" name="Heart Rhythm">
        <title>Gain-of-function mutation S422L in the KCNJ8-encoded cardiac K(ATP) channel Kir6.1 as a pathogenic substrate for J-wave syndromes.</title>
        <authorList>
            <person name="Medeiros-Domingo A."/>
            <person name="Tan B.H."/>
            <person name="Crotti L."/>
            <person name="Tester D.J."/>
            <person name="Eckhardt L."/>
            <person name="Cuoretti A."/>
            <person name="Kroboth S.L."/>
            <person name="Song C."/>
            <person name="Zhou Q."/>
            <person name="Kopp D."/>
            <person name="Schwartz P.J."/>
            <person name="Makielski J.C."/>
            <person name="Ackerman M.J."/>
        </authorList>
    </citation>
    <scope>POSSIBLE INVOLVEMENT IN SUSCEPTIBILITY TO J-WAVE SYNDROMES</scope>
    <scope>VARIANT LEU-422</scope>
    <scope>CHARACTERIZATION OF VARIANT LEU-422</scope>
    <scope>FUNCTION</scope>
    <scope>TRANSPORTER ACTIVITY</scope>
</reference>
<reference key="6">
    <citation type="journal article" date="2014" name="Hum. Mutat.">
        <title>Cantu syndrome resulting from activating mutation in the KCNJ8 gene.</title>
        <authorList>
            <person name="Cooper P.E."/>
            <person name="Reutter H."/>
            <person name="Woelfle J."/>
            <person name="Engels H."/>
            <person name="Grange D.K."/>
            <person name="van Haaften G."/>
            <person name="van Bon B.W."/>
            <person name="Hoischen A."/>
            <person name="Nichols C.G."/>
        </authorList>
    </citation>
    <scope>POSSIBLE INVOLVEMENT IN HTOCD</scope>
    <scope>VARIANT HTOCD SER-176</scope>
    <scope>CHARACTERIZATION OF VARIANT HTOCD SER-176</scope>
    <scope>FUNCTION</scope>
    <scope>TRANSPORTER ACTIVITY</scope>
</reference>
<reference key="7">
    <citation type="journal article" date="2017" name="J. Biol. Chem.">
        <title>Conserved functional consequences of disease-associated mutations in the slide-helix of Kir6.1 and Kir6.2 subunits of the ATP-sensitive potassium channel.</title>
        <authorList>
            <person name="Cooper P.E."/>
            <person name="McClenaghan C."/>
            <person name="Chen X."/>
            <person name="Stary-Weinzinger A."/>
            <person name="Nichols C.G."/>
        </authorList>
    </citation>
    <scope>FUNCTION</scope>
    <scope>CHARACTERIZATION OF VARIANT HTOCD MET-65</scope>
    <scope>MUTAGENESIS OF VAL-65</scope>
    <scope>TRANSPORTER ACTIVITY</scope>
</reference>
<reference key="8">
    <citation type="journal article" date="2011" name="Circ. Cardiovasc. Genet.">
        <title>Loss-of-function mutations in the KCNJ8-encoded Kir6.1 KATP channel and sudden infant death syndrome.</title>
        <authorList>
            <person name="Tester D.J."/>
            <person name="Tan B.H."/>
            <person name="Medeiros-Domingo A."/>
            <person name="Song C."/>
            <person name="Makielski J.C."/>
            <person name="Ackerman M.J."/>
        </authorList>
    </citation>
    <scope>VARIANTS SIDS GLU-332 DEL AND ILE-346</scope>
    <scope>CHARACTERIZATION OF VARIANTS SIDS GLU-332 DEL AND ILE-346</scope>
    <scope>FUNCTION</scope>
    <scope>TRANSPORTER ACTIVITY</scope>
</reference>
<reference key="9">
    <citation type="journal article" date="2013" name="Eur. J. Med. Genet.">
        <title>Mutation of KCNJ8 in a patient with Cantu syndrome with unique vascular abnormalities - support for the role of K(ATP) channels in this condition.</title>
        <authorList>
            <person name="Brownstein C.A."/>
            <person name="Towne M.C."/>
            <person name="Luquette L.J."/>
            <person name="Harris D.J."/>
            <person name="Marinakis N.S."/>
            <person name="Meinecke P."/>
            <person name="Kutsche K."/>
            <person name="Campeau P.M."/>
            <person name="Yu T.W."/>
            <person name="Margulies D.M."/>
            <person name="Agrawal P.B."/>
            <person name="Beggs A.H."/>
        </authorList>
    </citation>
    <scope>VARIANT HTOCD MET-65</scope>
</reference>
<accession>Q15842</accession>
<accession>O00657</accession>
<keyword id="KW-0225">Disease variant</keyword>
<keyword id="KW-0407">Ion channel</keyword>
<keyword id="KW-0406">Ion transport</keyword>
<keyword id="KW-0472">Membrane</keyword>
<keyword id="KW-0597">Phosphoprotein</keyword>
<keyword id="KW-0630">Potassium</keyword>
<keyword id="KW-0633">Potassium transport</keyword>
<keyword id="KW-1267">Proteomics identification</keyword>
<keyword id="KW-1185">Reference proteome</keyword>
<keyword id="KW-0812">Transmembrane</keyword>
<keyword id="KW-1133">Transmembrane helix</keyword>
<keyword id="KW-0813">Transport</keyword>
<keyword id="KW-0851">Voltage-gated channel</keyword>
<comment type="function">
    <text evidence="2 5 6 8 9">Inward rectifier potassium channels are characterized by a greater tendency to allow potassium to flow into the cell rather than out of it (PubMed:20558321, PubMed:21836131, PubMed:24700710, PubMed:28842488). Their voltage dependence is regulated by the concentration of extracellular potassium; as external potassium is raised, the voltage range of the channel opening shifts to more positive voltages (PubMed:20558321, PubMed:21836131, PubMed:24700710, PubMed:28842488). The inward rectification is mainly due to the blockage of outward current by internal magnesium. This channel is activated by internal ATP and can be blocked by external barium (PubMed:20558321, PubMed:21836131, PubMed:24700710, PubMed:28842488). Can form a sulfonylurea-sensitive but ATP-insensitive potassium channel with ABCC9 (By similarity).</text>
</comment>
<comment type="catalytic activity">
    <reaction evidence="5 6 8 9">
        <text>K(+)(in) = K(+)(out)</text>
        <dbReference type="Rhea" id="RHEA:29463"/>
        <dbReference type="ChEBI" id="CHEBI:29103"/>
    </reaction>
</comment>
<comment type="subunit">
    <text evidence="2">Interacts with ABCC9.</text>
</comment>
<comment type="interaction">
    <interactant intactId="EBI-17440235">
        <id>Q15842</id>
    </interactant>
    <interactant intactId="EBI-489887">
        <id>P50402</id>
        <label>EMD</label>
    </interactant>
    <organismsDiffer>false</organismsDiffer>
    <experiments>3</experiments>
</comment>
<comment type="interaction">
    <interactant intactId="EBI-17440235">
        <id>Q15842</id>
    </interactant>
    <interactant intactId="EBI-2844246">
        <id>Q9NV12</id>
        <label>TMEM140</label>
    </interactant>
    <organismsDiffer>false</organismsDiffer>
    <experiments>3</experiments>
</comment>
<comment type="interaction">
    <interactant intactId="EBI-17440235">
        <id>Q15842</id>
    </interactant>
    <interactant intactId="EBI-3922833">
        <id>Q969K7</id>
        <label>TMEM54</label>
    </interactant>
    <organismsDiffer>false</organismsDiffer>
    <experiments>3</experiments>
</comment>
<comment type="subcellular location">
    <subcellularLocation>
        <location evidence="3">Membrane</location>
        <topology evidence="3">Multi-pass membrane protein</topology>
    </subcellularLocation>
</comment>
<comment type="tissue specificity">
    <text evidence="10">Predominantly detected in fetal and adult heart.</text>
</comment>
<comment type="disease">
    <text evidence="5">Defects in KCNJ8 may be associated with susceptibility to J-wave syndromes, a group of heart disorders characterized by early repolarization events as indicated by abnormal J-wave manifestation on electrocardiogram (ECG). The J point denotes the junction of the QRS complex and the ST segment on the ECG, marking the end of depolarization and the beginning of repolarization. An abnormal J wave is a deflection with a dome or hump morphology immediately following the QRS complex of the surface ECG. Examples of J-wave disorders are arrhythmias associated with an early repolarization pattern in the inferior or mid to lateral precordial leads, Brugada syndrome, some cases of idiopathic ventricular fibrillation (VF) with an early repolarization pattern in the inferior, inferolateral or global leads, as well as arrhythmias associated with hypothermia.</text>
</comment>
<comment type="disease" evidence="6">
    <disease id="DI-01096">
        <name>Sudden infant death syndrome</name>
        <acronym>SIDS</acronym>
        <description>SIDS is the sudden death of an infant younger than 1 year that remains unexplained after a thorough case investigation, including performance of a complete autopsy, examination of the death scene, and review of clinical history. Pathophysiologic mechanisms for SIDS may include respiratory dysfunction, cardiac dysrhythmias, cardiorespiratory instability, and inborn errors of metabolism, but definitive pathogenic mechanisms precipitating an infant sudden death remain elusive.</description>
        <dbReference type="MIM" id="272120"/>
    </disease>
    <text>Disease susceptibility is associated with variants affecting the gene represented in this entry.</text>
</comment>
<comment type="disease" evidence="7 8 9">
    <disease id="DI-03485">
        <name>Hypertrichotic osteochondrodysplasia</name>
        <acronym>HTOCD</acronym>
        <description>A rare disorder characterized by congenital hypertrichosis, neonatal macrosomia, a distinct osteochondrodysplasia, and cardiomegaly. The hypertrichosis leads to thick scalp hair, which extends onto the forehead, and a general increase in body hair. In addition, macrocephaly and coarse facial features, including a broad nasal bridge, epicanthal folds, a wide mouth, and full lips, can be suggestive of a storage disorder. About half of affected individuals are macrosomic and edematous at birth, whereas in childhood they usually have a muscular appearance with little subcutaneous fat. Thickened calvarium, narrow thorax, wide ribs, flattened or ovoid vertebral bodies, coxa valga, osteopenia, enlarged medullary canals, and metaphyseal widening of long bones have been reported. Cardiac manifestations such as patent ductus arteriosus, ventricular hypertrophy, pulmonary hypertension, and pericardial effusions are present in approximately 80% of cases. Motor development is usually delayed due to hypotonia. Most patients have a mild speech delay, and a small percentage have learning difficulties or intellectual disability.</description>
        <dbReference type="MIM" id="239850"/>
    </disease>
    <text>The disease may be caused by variants affecting distinct genetic loci, including the gene represented in this entry.</text>
</comment>
<comment type="similarity">
    <text evidence="11">Belongs to the inward rectifier-type potassium channel (TC 1.A.2.1) family. KCNJ8 subfamily.</text>
</comment>
<proteinExistence type="evidence at protein level"/>
<organism>
    <name type="scientific">Homo sapiens</name>
    <name type="common">Human</name>
    <dbReference type="NCBI Taxonomy" id="9606"/>
    <lineage>
        <taxon>Eukaryota</taxon>
        <taxon>Metazoa</taxon>
        <taxon>Chordata</taxon>
        <taxon>Craniata</taxon>
        <taxon>Vertebrata</taxon>
        <taxon>Euteleostomi</taxon>
        <taxon>Mammalia</taxon>
        <taxon>Eutheria</taxon>
        <taxon>Euarchontoglires</taxon>
        <taxon>Primates</taxon>
        <taxon>Haplorrhini</taxon>
        <taxon>Catarrhini</taxon>
        <taxon>Hominidae</taxon>
        <taxon>Homo</taxon>
    </lineage>
</organism>